<protein>
    <recommendedName>
        <fullName evidence="1">Small ribosomal subunit protein uS11</fullName>
    </recommendedName>
    <alternativeName>
        <fullName evidence="2">30S ribosomal protein S11</fullName>
    </alternativeName>
</protein>
<organism>
    <name type="scientific">Bacillus cytotoxicus (strain DSM 22905 / CIP 110041 / 391-98 / NVH 391-98)</name>
    <dbReference type="NCBI Taxonomy" id="315749"/>
    <lineage>
        <taxon>Bacteria</taxon>
        <taxon>Bacillati</taxon>
        <taxon>Bacillota</taxon>
        <taxon>Bacilli</taxon>
        <taxon>Bacillales</taxon>
        <taxon>Bacillaceae</taxon>
        <taxon>Bacillus</taxon>
        <taxon>Bacillus cereus group</taxon>
    </lineage>
</organism>
<comment type="function">
    <text evidence="1">Located on the platform of the 30S subunit, it bridges several disparate RNA helices of the 16S rRNA. Forms part of the Shine-Dalgarno cleft in the 70S ribosome.</text>
</comment>
<comment type="subunit">
    <text evidence="1">Part of the 30S ribosomal subunit. Interacts with proteins S7 and S18. Binds to IF-3.</text>
</comment>
<comment type="similarity">
    <text evidence="1">Belongs to the universal ribosomal protein uS11 family.</text>
</comment>
<reference key="1">
    <citation type="journal article" date="2008" name="Chem. Biol. Interact.">
        <title>Extending the Bacillus cereus group genomics to putative food-borne pathogens of different toxicity.</title>
        <authorList>
            <person name="Lapidus A."/>
            <person name="Goltsman E."/>
            <person name="Auger S."/>
            <person name="Galleron N."/>
            <person name="Segurens B."/>
            <person name="Dossat C."/>
            <person name="Land M.L."/>
            <person name="Broussolle V."/>
            <person name="Brillard J."/>
            <person name="Guinebretiere M.-H."/>
            <person name="Sanchis V."/>
            <person name="Nguen-the C."/>
            <person name="Lereclus D."/>
            <person name="Richardson P."/>
            <person name="Wincker P."/>
            <person name="Weissenbach J."/>
            <person name="Ehrlich S.D."/>
            <person name="Sorokin A."/>
        </authorList>
    </citation>
    <scope>NUCLEOTIDE SEQUENCE [LARGE SCALE GENOMIC DNA]</scope>
    <source>
        <strain>DSM 22905 / CIP 110041 / 391-98 / NVH 391-98</strain>
    </source>
</reference>
<proteinExistence type="inferred from homology"/>
<feature type="chain" id="PRO_1000086176" description="Small ribosomal subunit protein uS11">
    <location>
        <begin position="1"/>
        <end position="129"/>
    </location>
</feature>
<keyword id="KW-0687">Ribonucleoprotein</keyword>
<keyword id="KW-0689">Ribosomal protein</keyword>
<keyword id="KW-0694">RNA-binding</keyword>
<keyword id="KW-0699">rRNA-binding</keyword>
<name>RS11_BACCN</name>
<gene>
    <name evidence="1" type="primary">rpsK</name>
    <name type="ordered locus">Bcer98_0130</name>
</gene>
<evidence type="ECO:0000255" key="1">
    <source>
        <dbReference type="HAMAP-Rule" id="MF_01310"/>
    </source>
</evidence>
<evidence type="ECO:0000305" key="2"/>
<sequence>MARKTNTRKKRVKKNIETGVAHIRSTFNNTIVTLTDTHGNAISWSSAGALGFRGSRKSTPFAAQMAAETAAKAAMEHGLKSLEVTVKGPGAGREAAIRALQAAGLEVTAIRDVTPVPHNGCRPPKRRRV</sequence>
<dbReference type="EMBL" id="CP000764">
    <property type="protein sequence ID" value="ABS20504.1"/>
    <property type="molecule type" value="Genomic_DNA"/>
</dbReference>
<dbReference type="RefSeq" id="WP_011983266.1">
    <property type="nucleotide sequence ID" value="NC_009674.1"/>
</dbReference>
<dbReference type="SMR" id="A7GK46"/>
<dbReference type="STRING" id="315749.Bcer98_0130"/>
<dbReference type="GeneID" id="33895451"/>
<dbReference type="KEGG" id="bcy:Bcer98_0130"/>
<dbReference type="eggNOG" id="COG0100">
    <property type="taxonomic scope" value="Bacteria"/>
</dbReference>
<dbReference type="HOGENOM" id="CLU_072439_5_0_9"/>
<dbReference type="OrthoDB" id="9806415at2"/>
<dbReference type="Proteomes" id="UP000002300">
    <property type="component" value="Chromosome"/>
</dbReference>
<dbReference type="GO" id="GO:1990904">
    <property type="term" value="C:ribonucleoprotein complex"/>
    <property type="evidence" value="ECO:0007669"/>
    <property type="project" value="UniProtKB-KW"/>
</dbReference>
<dbReference type="GO" id="GO:0005840">
    <property type="term" value="C:ribosome"/>
    <property type="evidence" value="ECO:0007669"/>
    <property type="project" value="UniProtKB-KW"/>
</dbReference>
<dbReference type="GO" id="GO:0019843">
    <property type="term" value="F:rRNA binding"/>
    <property type="evidence" value="ECO:0007669"/>
    <property type="project" value="UniProtKB-UniRule"/>
</dbReference>
<dbReference type="GO" id="GO:0003735">
    <property type="term" value="F:structural constituent of ribosome"/>
    <property type="evidence" value="ECO:0007669"/>
    <property type="project" value="InterPro"/>
</dbReference>
<dbReference type="GO" id="GO:0006412">
    <property type="term" value="P:translation"/>
    <property type="evidence" value="ECO:0007669"/>
    <property type="project" value="UniProtKB-UniRule"/>
</dbReference>
<dbReference type="FunFam" id="3.30.420.80:FF:000001">
    <property type="entry name" value="30S ribosomal protein S11"/>
    <property type="match status" value="1"/>
</dbReference>
<dbReference type="Gene3D" id="3.30.420.80">
    <property type="entry name" value="Ribosomal protein S11"/>
    <property type="match status" value="1"/>
</dbReference>
<dbReference type="HAMAP" id="MF_01310">
    <property type="entry name" value="Ribosomal_uS11"/>
    <property type="match status" value="1"/>
</dbReference>
<dbReference type="InterPro" id="IPR001971">
    <property type="entry name" value="Ribosomal_uS11"/>
</dbReference>
<dbReference type="InterPro" id="IPR019981">
    <property type="entry name" value="Ribosomal_uS11_bac-type"/>
</dbReference>
<dbReference type="InterPro" id="IPR018102">
    <property type="entry name" value="Ribosomal_uS11_CS"/>
</dbReference>
<dbReference type="InterPro" id="IPR036967">
    <property type="entry name" value="Ribosomal_uS11_sf"/>
</dbReference>
<dbReference type="NCBIfam" id="NF003698">
    <property type="entry name" value="PRK05309.1"/>
    <property type="match status" value="1"/>
</dbReference>
<dbReference type="NCBIfam" id="TIGR03632">
    <property type="entry name" value="uS11_bact"/>
    <property type="match status" value="1"/>
</dbReference>
<dbReference type="PANTHER" id="PTHR11759">
    <property type="entry name" value="40S RIBOSOMAL PROTEIN S14/30S RIBOSOMAL PROTEIN S11"/>
    <property type="match status" value="1"/>
</dbReference>
<dbReference type="Pfam" id="PF00411">
    <property type="entry name" value="Ribosomal_S11"/>
    <property type="match status" value="1"/>
</dbReference>
<dbReference type="PIRSF" id="PIRSF002131">
    <property type="entry name" value="Ribosomal_S11"/>
    <property type="match status" value="1"/>
</dbReference>
<dbReference type="SUPFAM" id="SSF53137">
    <property type="entry name" value="Translational machinery components"/>
    <property type="match status" value="1"/>
</dbReference>
<dbReference type="PROSITE" id="PS00054">
    <property type="entry name" value="RIBOSOMAL_S11"/>
    <property type="match status" value="1"/>
</dbReference>
<accession>A7GK46</accession>